<feature type="chain" id="PRO_0000257627" description="Dual-action ribosomal maturation protein DarP">
    <location>
        <begin position="1"/>
        <end position="183"/>
    </location>
</feature>
<name>DARP_ECOUT</name>
<proteinExistence type="inferred from homology"/>
<dbReference type="EMBL" id="CP000243">
    <property type="protein sequence ID" value="ABE10242.1"/>
    <property type="molecule type" value="Genomic_DNA"/>
</dbReference>
<dbReference type="SMR" id="Q1R322"/>
<dbReference type="KEGG" id="eci:UTI89_C4838"/>
<dbReference type="HOGENOM" id="CLU_106757_2_0_6"/>
<dbReference type="Proteomes" id="UP000001952">
    <property type="component" value="Chromosome"/>
</dbReference>
<dbReference type="GO" id="GO:0005829">
    <property type="term" value="C:cytosol"/>
    <property type="evidence" value="ECO:0007669"/>
    <property type="project" value="TreeGrafter"/>
</dbReference>
<dbReference type="GO" id="GO:0043022">
    <property type="term" value="F:ribosome binding"/>
    <property type="evidence" value="ECO:0007669"/>
    <property type="project" value="UniProtKB-UniRule"/>
</dbReference>
<dbReference type="GO" id="GO:0019843">
    <property type="term" value="F:rRNA binding"/>
    <property type="evidence" value="ECO:0007669"/>
    <property type="project" value="UniProtKB-UniRule"/>
</dbReference>
<dbReference type="GO" id="GO:1902626">
    <property type="term" value="P:assembly of large subunit precursor of preribosome"/>
    <property type="evidence" value="ECO:0007669"/>
    <property type="project" value="UniProtKB-UniRule"/>
</dbReference>
<dbReference type="CDD" id="cd16331">
    <property type="entry name" value="YjgA-like"/>
    <property type="match status" value="1"/>
</dbReference>
<dbReference type="FunFam" id="1.10.60.30:FF:000001">
    <property type="entry name" value="UPF0307 protein YjgA"/>
    <property type="match status" value="1"/>
</dbReference>
<dbReference type="FunFam" id="1.10.60.30:FF:000002">
    <property type="entry name" value="UPF0307 protein YjgA"/>
    <property type="match status" value="1"/>
</dbReference>
<dbReference type="Gene3D" id="1.10.60.30">
    <property type="entry name" value="PSPTO4464-like domains"/>
    <property type="match status" value="2"/>
</dbReference>
<dbReference type="HAMAP" id="MF_00765">
    <property type="entry name" value="DarP"/>
    <property type="match status" value="1"/>
</dbReference>
<dbReference type="InterPro" id="IPR006839">
    <property type="entry name" value="DarP"/>
</dbReference>
<dbReference type="InterPro" id="IPR023153">
    <property type="entry name" value="DarP_sf"/>
</dbReference>
<dbReference type="NCBIfam" id="NF003593">
    <property type="entry name" value="PRK05255.1-1"/>
    <property type="match status" value="1"/>
</dbReference>
<dbReference type="PANTHER" id="PTHR38101">
    <property type="entry name" value="UPF0307 PROTEIN YJGA"/>
    <property type="match status" value="1"/>
</dbReference>
<dbReference type="PANTHER" id="PTHR38101:SF1">
    <property type="entry name" value="UPF0307 PROTEIN YJGA"/>
    <property type="match status" value="1"/>
</dbReference>
<dbReference type="Pfam" id="PF04751">
    <property type="entry name" value="DarP"/>
    <property type="match status" value="1"/>
</dbReference>
<dbReference type="PIRSF" id="PIRSF016183">
    <property type="entry name" value="UCP016183"/>
    <property type="match status" value="1"/>
</dbReference>
<dbReference type="SUPFAM" id="SSF158710">
    <property type="entry name" value="PSPTO4464-like"/>
    <property type="match status" value="1"/>
</dbReference>
<gene>
    <name evidence="1" type="primary">darP</name>
    <name type="ordered locus">UTI89_C4838</name>
</gene>
<organism>
    <name type="scientific">Escherichia coli (strain UTI89 / UPEC)</name>
    <dbReference type="NCBI Taxonomy" id="364106"/>
    <lineage>
        <taxon>Bacteria</taxon>
        <taxon>Pseudomonadati</taxon>
        <taxon>Pseudomonadota</taxon>
        <taxon>Gammaproteobacteria</taxon>
        <taxon>Enterobacterales</taxon>
        <taxon>Enterobacteriaceae</taxon>
        <taxon>Escherichia</taxon>
    </lineage>
</organism>
<reference key="1">
    <citation type="journal article" date="2006" name="Proc. Natl. Acad. Sci. U.S.A.">
        <title>Identification of genes subject to positive selection in uropathogenic strains of Escherichia coli: a comparative genomics approach.</title>
        <authorList>
            <person name="Chen S.L."/>
            <person name="Hung C.-S."/>
            <person name="Xu J."/>
            <person name="Reigstad C.S."/>
            <person name="Magrini V."/>
            <person name="Sabo A."/>
            <person name="Blasiar D."/>
            <person name="Bieri T."/>
            <person name="Meyer R.R."/>
            <person name="Ozersky P."/>
            <person name="Armstrong J.R."/>
            <person name="Fulton R.S."/>
            <person name="Latreille J.P."/>
            <person name="Spieth J."/>
            <person name="Hooton T.M."/>
            <person name="Mardis E.R."/>
            <person name="Hultgren S.J."/>
            <person name="Gordon J.I."/>
        </authorList>
    </citation>
    <scope>NUCLEOTIDE SEQUENCE [LARGE SCALE GENOMIC DNA]</scope>
    <source>
        <strain>UTI89 / UPEC</strain>
    </source>
</reference>
<sequence>MTKQPEDWLDDVPGDDIEDEDDEIIWVSKSEIKRDAEELKRLGAEIVDLGKNALDKIPLDADLRAAIELAQRIKMEGRRRQLQLIGKMLRQRDVEPIRQALDKLKNRHNQQVVLFHKLENLRDRLIDQGDDAIAEVLNLWPDADRQQLRTLIRNAKKEKEGNKPPKSARQIFQYLRELAENEG</sequence>
<protein>
    <recommendedName>
        <fullName evidence="1">Dual-action ribosomal maturation protein DarP</fullName>
    </recommendedName>
    <alternativeName>
        <fullName evidence="1">Large ribosomal subunit assembly factor DarP</fullName>
    </alternativeName>
</protein>
<evidence type="ECO:0000255" key="1">
    <source>
        <dbReference type="HAMAP-Rule" id="MF_00765"/>
    </source>
</evidence>
<comment type="function">
    <text evidence="1">Member of a network of 50S ribosomal subunit biogenesis factors which assembles along the 30S-50S interface, preventing incorrect 23S rRNA structures from forming. Promotes peptidyl transferase center (PTC) maturation.</text>
</comment>
<comment type="subcellular location">
    <subcellularLocation>
        <location evidence="1">Cytoplasm</location>
    </subcellularLocation>
    <text evidence="1">Associates with late stage pre-50S ribosomal subunits.</text>
</comment>
<comment type="similarity">
    <text evidence="1">Belongs to the DarP family.</text>
</comment>
<accession>Q1R322</accession>
<keyword id="KW-0963">Cytoplasm</keyword>
<keyword id="KW-0690">Ribosome biogenesis</keyword>
<keyword id="KW-0694">RNA-binding</keyword>
<keyword id="KW-0699">rRNA-binding</keyword>